<name>NDB49_HETPE</name>
<evidence type="ECO:0000250" key="1"/>
<evidence type="ECO:0000255" key="2"/>
<evidence type="ECO:0000269" key="3">
    <source>
    </source>
</evidence>
<evidence type="ECO:0000303" key="4">
    <source>
    </source>
</evidence>
<evidence type="ECO:0000303" key="5">
    <source>
    </source>
</evidence>
<evidence type="ECO:0000303" key="6">
    <source>
    </source>
</evidence>
<evidence type="ECO:0000305" key="7"/>
<evidence type="ECO:0000305" key="8">
    <source>
    </source>
</evidence>
<protein>
    <recommendedName>
        <fullName evidence="4">Peptide Hp1090</fullName>
    </recommendedName>
    <alternativeName>
        <fullName evidence="6">Non-disulfide-bridged peptide 4.9</fullName>
        <shortName evidence="6">NDBP-4.9</shortName>
    </alternativeName>
    <alternativeName>
        <fullName evidence="5">Non-disulfide-bridged peptide 5.9</fullName>
        <shortName evidence="5">NDBP-5.9</shortName>
    </alternativeName>
</protein>
<dbReference type="SMR" id="P0DJ02"/>
<dbReference type="GO" id="GO:0005576">
    <property type="term" value="C:extracellular region"/>
    <property type="evidence" value="ECO:0007669"/>
    <property type="project" value="UniProtKB-SubCell"/>
</dbReference>
<dbReference type="GO" id="GO:0016020">
    <property type="term" value="C:membrane"/>
    <property type="evidence" value="ECO:0007669"/>
    <property type="project" value="UniProtKB-KW"/>
</dbReference>
<dbReference type="GO" id="GO:0044218">
    <property type="term" value="C:other organism cell membrane"/>
    <property type="evidence" value="ECO:0007669"/>
    <property type="project" value="UniProtKB-KW"/>
</dbReference>
<dbReference type="GO" id="GO:0090729">
    <property type="term" value="F:toxin activity"/>
    <property type="evidence" value="ECO:0007669"/>
    <property type="project" value="UniProtKB-KW"/>
</dbReference>
<dbReference type="GO" id="GO:0042742">
    <property type="term" value="P:defense response to bacterium"/>
    <property type="evidence" value="ECO:0007669"/>
    <property type="project" value="UniProtKB-KW"/>
</dbReference>
<dbReference type="GO" id="GO:0031640">
    <property type="term" value="P:killing of cells of another organism"/>
    <property type="evidence" value="ECO:0007669"/>
    <property type="project" value="UniProtKB-KW"/>
</dbReference>
<dbReference type="GO" id="GO:0050688">
    <property type="term" value="P:regulation of defense response to virus"/>
    <property type="evidence" value="ECO:0007669"/>
    <property type="project" value="UniProtKB-KW"/>
</dbReference>
<accession>P0DJ02</accession>
<sequence>MKTQFAIFLITLVLFQMFSQSDAIFKAIWSGIKSLFGKRGLSDLDDLDESFDGEVSQADIDFLKELMQ</sequence>
<comment type="function">
    <text evidence="3">Amphipathic peptide which inhibits the growth of Gram-positive bacteria.</text>
</comment>
<comment type="subcellular location">
    <subcellularLocation>
        <location evidence="1">Secreted</location>
    </subcellularLocation>
    <subcellularLocation>
        <location evidence="1">Target cell membrane</location>
    </subcellularLocation>
    <text evidence="1">Forms an alpha-helical membrane channel in the prey.</text>
</comment>
<comment type="tissue specificity">
    <text>Expressed by the venom gland.</text>
</comment>
<comment type="miscellaneous">
    <text evidence="8">This peptide has a significant inhibitory effect on hepatitis C virus (HCV) infection (IC(50)=7.62 ug/ml). Furthermore, this peptide potently inhibits HCV before viral entry into cells and kills HCV rapidly in vitro (PubMed:20950663).</text>
</comment>
<comment type="similarity">
    <text evidence="7">Belongs to the non-disulfide-bridged peptide (NDBP) superfamily. Short antimicrobial peptide (group 4) family.</text>
</comment>
<reference key="1">
    <citation type="journal article" date="2011" name="Peptides">
        <title>A new natural alpha-helical peptide from the venom of the scorpion Heterometrus petersii kills HCV.</title>
        <authorList>
            <person name="Yan R."/>
            <person name="Zhao Z."/>
            <person name="He Y."/>
            <person name="Wu L."/>
            <person name="Cai D."/>
            <person name="Hong W."/>
            <person name="Wu Y."/>
            <person name="Cao Z."/>
            <person name="Zheng C."/>
            <person name="Li W."/>
        </authorList>
    </citation>
    <scope>NUCLEOTIDE SEQUENCE [MRNA]</scope>
    <scope>SYNTHESIS OF 24-36</scope>
    <scope>CIRCULAR DICHROISM</scope>
    <scope>FUNCTION</scope>
    <source>
        <tissue>Venom gland</tissue>
    </source>
</reference>
<reference key="2">
    <citation type="journal article" date="2012" name="Peptides">
        <title>Gene cloning and functional characterization of four novel antimicrobial-like peptides from scorpions of the family Vaejovidae.</title>
        <authorList>
            <person name="Ramirez-Carreto S."/>
            <person name="Quintero-Hernandez V."/>
            <person name="Jimenez-Vargas J.M."/>
            <person name="Corzo G."/>
            <person name="Possani L.D."/>
            <person name="Becerril B."/>
            <person name="Ortiz E."/>
        </authorList>
    </citation>
    <scope>NOMENCLATURE</scope>
</reference>
<reference key="3">
    <citation type="journal article" date="2014" name="Peptides">
        <title>Scorpion venom peptides with no disulfide bridges: a review.</title>
        <authorList>
            <person name="Almaaytah A."/>
            <person name="Albalas Q."/>
        </authorList>
    </citation>
    <scope>NOMENCLATURE</scope>
</reference>
<proteinExistence type="evidence at transcript level"/>
<keyword id="KW-0027">Amidation</keyword>
<keyword id="KW-0044">Antibiotic</keyword>
<keyword id="KW-0929">Antimicrobial</keyword>
<keyword id="KW-0930">Antiviral protein</keyword>
<keyword id="KW-0165">Cleavage on pair of basic residues</keyword>
<keyword id="KW-0204">Cytolysis</keyword>
<keyword id="KW-0472">Membrane</keyword>
<keyword id="KW-0964">Secreted</keyword>
<keyword id="KW-0732">Signal</keyword>
<keyword id="KW-1052">Target cell membrane</keyword>
<keyword id="KW-1053">Target membrane</keyword>
<keyword id="KW-0800">Toxin</keyword>
<feature type="signal peptide" evidence="2">
    <location>
        <begin position="1"/>
        <end position="23"/>
    </location>
</feature>
<feature type="peptide" id="PRO_0000412875" description="Peptide Hp1090">
    <location>
        <begin position="24"/>
        <end position="36"/>
    </location>
</feature>
<feature type="propeptide" id="PRO_0000412876" evidence="1">
    <location>
        <begin position="40"/>
        <end position="68"/>
    </location>
</feature>
<feature type="modified residue" description="Phenylalanine amide" evidence="1">
    <location>
        <position position="36"/>
    </location>
</feature>
<organism>
    <name type="scientific">Heterometrus petersii</name>
    <name type="common">Asian forest scorpion</name>
    <dbReference type="NCBI Taxonomy" id="754296"/>
    <lineage>
        <taxon>Eukaryota</taxon>
        <taxon>Metazoa</taxon>
        <taxon>Ecdysozoa</taxon>
        <taxon>Arthropoda</taxon>
        <taxon>Chelicerata</taxon>
        <taxon>Arachnida</taxon>
        <taxon>Scorpiones</taxon>
        <taxon>Iurida</taxon>
        <taxon>Scorpionoidea</taxon>
        <taxon>Scorpionidae</taxon>
        <taxon>Heterometrinae</taxon>
        <taxon>Heterometrus</taxon>
    </lineage>
</organism>